<sequence length="150" mass="16068">ELLVKNGVKFGEAVWFKAGAQIFSEGGLDYLGNPNLIHAQSILAIWACQVVLMGLIEGYRVGGGPLGEGLDPLYPGDAFDPLGLADDPEAKAELKVKEIKNGRLAMFSMFGFFVQAIVTGKGPIENLYDHLADPVANNAWAYATNFVPGK</sequence>
<feature type="chain" id="PRO_0000165475" description="Chlorophyll a-b binding protein type 2 member 2">
    <location>
        <begin position="1" status="less than"/>
        <end position="150"/>
    </location>
</feature>
<feature type="transmembrane region" description="Helical" evidence="4">
    <location>
        <begin position="36"/>
        <end position="56"/>
    </location>
</feature>
<feature type="transmembrane region" description="Helical" evidence="4">
    <location>
        <begin position="104"/>
        <end position="124"/>
    </location>
</feature>
<feature type="binding site" evidence="1">
    <location>
        <position position="21"/>
    </location>
    <ligand>
        <name>chlorophyll a</name>
        <dbReference type="ChEBI" id="CHEBI:58416"/>
        <label>3</label>
    </ligand>
</feature>
<feature type="binding site" evidence="1">
    <location>
        <position position="31"/>
    </location>
    <ligand>
        <name>chlorophyll a</name>
        <dbReference type="ChEBI" id="CHEBI:58416"/>
        <label>3</label>
    </ligand>
</feature>
<feature type="binding site" description="axial binding residue" evidence="1">
    <location>
        <position position="37"/>
    </location>
    <ligand>
        <name>chlorophyll b</name>
        <dbReference type="ChEBI" id="CHEBI:61721"/>
        <label>2</label>
    </ligand>
    <ligandPart>
        <name>Mg</name>
        <dbReference type="ChEBI" id="CHEBI:25107"/>
    </ligandPart>
</feature>
<feature type="binding site" evidence="1">
    <location>
        <position position="41"/>
    </location>
    <ligand>
        <name>chlorophyll b</name>
        <dbReference type="ChEBI" id="CHEBI:61721"/>
        <label>3</label>
    </ligand>
</feature>
<feature type="binding site" evidence="1">
    <location>
        <position position="49"/>
    </location>
    <ligand>
        <name>chlorophyll b</name>
        <dbReference type="ChEBI" id="CHEBI:61721"/>
        <label>4</label>
    </ligand>
</feature>
<feature type="binding site" evidence="2">
    <location>
        <position position="49"/>
    </location>
    <ligand>
        <name>chlorophyll b</name>
        <dbReference type="ChEBI" id="CHEBI:61721"/>
        <label>5</label>
    </ligand>
</feature>
<feature type="binding site" description="axial binding residue" evidence="3">
    <location>
        <position position="57"/>
    </location>
    <ligand>
        <name>chlorophyll b</name>
        <dbReference type="ChEBI" id="CHEBI:61721"/>
        <label>3</label>
    </ligand>
    <ligandPart>
        <name>Mg</name>
        <dbReference type="ChEBI" id="CHEBI:25107"/>
    </ligandPart>
</feature>
<feature type="binding site" evidence="1">
    <location>
        <position position="60"/>
    </location>
    <ligand>
        <name>chlorophyll b</name>
        <dbReference type="ChEBI" id="CHEBI:61721"/>
        <label>4</label>
    </ligand>
</feature>
<feature type="binding site" evidence="1">
    <location>
        <position position="66"/>
    </location>
    <ligand>
        <name>chlorophyll b</name>
        <dbReference type="ChEBI" id="CHEBI:61721"/>
        <label>2</label>
    </ligand>
</feature>
<feature type="binding site" evidence="1">
    <location>
        <position position="97"/>
    </location>
    <ligand>
        <name>chlorophyll a</name>
        <dbReference type="ChEBI" id="CHEBI:58416"/>
        <label>5</label>
    </ligand>
</feature>
<feature type="binding site" description="axial binding residue" evidence="3">
    <location>
        <position position="98"/>
    </location>
    <ligand>
        <name>chlorophyll a</name>
        <dbReference type="ChEBI" id="CHEBI:58416"/>
        <label>3</label>
    </ligand>
    <ligandPart>
        <name>Mg</name>
        <dbReference type="ChEBI" id="CHEBI:25107"/>
    </ligandPart>
</feature>
<feature type="binding site" description="axial binding residue" evidence="3">
    <location>
        <position position="101"/>
    </location>
    <ligand>
        <name>chlorophyll a</name>
        <dbReference type="ChEBI" id="CHEBI:58416"/>
        <label>4</label>
    </ligand>
    <ligandPart>
        <name>Mg</name>
        <dbReference type="ChEBI" id="CHEBI:25107"/>
    </ligandPart>
</feature>
<feature type="binding site" evidence="1">
    <location>
        <position position="103"/>
    </location>
    <ligand>
        <name>chlorophyll a</name>
        <dbReference type="ChEBI" id="CHEBI:58416"/>
        <label>1</label>
    </ligand>
</feature>
<feature type="binding site" description="axial binding residue" evidence="3">
    <location>
        <position position="115"/>
    </location>
    <ligand>
        <name>chlorophyll a</name>
        <dbReference type="ChEBI" id="CHEBI:58416"/>
        <label>5</label>
    </ligand>
    <ligandPart>
        <name>Mg</name>
        <dbReference type="ChEBI" id="CHEBI:25107"/>
    </ligandPart>
</feature>
<feature type="binding site" description="axial binding residue" evidence="3">
    <location>
        <position position="130"/>
    </location>
    <ligand>
        <name>chlorophyll a</name>
        <dbReference type="ChEBI" id="CHEBI:58416"/>
        <label>6</label>
    </ligand>
    <ligandPart>
        <name>Mg</name>
        <dbReference type="ChEBI" id="CHEBI:25107"/>
    </ligandPart>
</feature>
<feature type="binding site" evidence="1">
    <location>
        <position position="139"/>
    </location>
    <ligand>
        <name>chlorophyll a</name>
        <dbReference type="ChEBI" id="CHEBI:58416"/>
        <label>6</label>
    </ligand>
</feature>
<feature type="binding site" evidence="1">
    <location>
        <position position="146"/>
    </location>
    <ligand>
        <name>chlorophyll b</name>
        <dbReference type="ChEBI" id="CHEBI:61721"/>
        <label>5</label>
    </ligand>
</feature>
<feature type="non-terminal residue">
    <location>
        <position position="1"/>
    </location>
</feature>
<reference key="1">
    <citation type="journal article" date="1990" name="Plant Mol. Biol.">
        <title>Type I and type II genes for the chlorophyll a/b-binding protein in the gymnosperm Pinus sylvestris (Scots pine): cDNA cloning and sequence analysis.</title>
        <authorList>
            <person name="Jansson S."/>
            <person name="Gustatsson P."/>
        </authorList>
    </citation>
    <scope>NUCLEOTIDE SEQUENCE [MRNA]</scope>
    <source>
        <tissue>Cotyledon</tissue>
    </source>
</reference>
<name>CB22_PINSY</name>
<comment type="function">
    <text>The light-harvesting complex (LHC) functions as a light receptor, it captures and delivers excitation energy to photosystems with which it is closely associated.</text>
</comment>
<comment type="cofactor">
    <text evidence="1">Binds at least 14 chlorophylls (8 Chl-a and 6 Chl-b) and carotenoids such as lutein and neoxanthin.</text>
</comment>
<comment type="subunit">
    <text>The LHC complex consists of chlorophyll a-b binding proteins.</text>
</comment>
<comment type="subcellular location">
    <subcellularLocation>
        <location>Plastid</location>
        <location>Chloroplast thylakoid membrane</location>
        <topology>Multi-pass membrane protein</topology>
    </subcellularLocation>
</comment>
<comment type="domain">
    <text>The N-terminus of the protein extends into the stroma where it is involved with adhesion of granal membranes and post-translational modifications; both are believed to mediate the distribution of excitation energy between photosystems I and II.</text>
</comment>
<comment type="PTM">
    <text evidence="1">Photoregulated by reversible phosphorylation of its threonine residues.</text>
</comment>
<comment type="similarity">
    <text evidence="5">Belongs to the light-harvesting chlorophyll a/b-binding (LHC) protein family.</text>
</comment>
<protein>
    <recommendedName>
        <fullName>Chlorophyll a-b binding protein type 2 member 2</fullName>
    </recommendedName>
    <alternativeName>
        <fullName>Chlorophyll a-b binding protein type II 2</fullName>
        <shortName>CAB</shortName>
    </alternativeName>
    <alternativeName>
        <fullName>LHCP</fullName>
    </alternativeName>
</protein>
<accession>P15192</accession>
<evidence type="ECO:0000250" key="1"/>
<evidence type="ECO:0000250" key="2">
    <source>
        <dbReference type="UniProtKB" id="P07371"/>
    </source>
</evidence>
<evidence type="ECO:0000250" key="3">
    <source>
        <dbReference type="UniProtKB" id="P12333"/>
    </source>
</evidence>
<evidence type="ECO:0000255" key="4"/>
<evidence type="ECO:0000305" key="5"/>
<dbReference type="EMBL" id="M37489">
    <property type="protein sequence ID" value="AAA33776.1"/>
    <property type="molecule type" value="mRNA"/>
</dbReference>
<dbReference type="PIR" id="S07996">
    <property type="entry name" value="S07996"/>
</dbReference>
<dbReference type="SMR" id="P15192"/>
<dbReference type="GO" id="GO:0009535">
    <property type="term" value="C:chloroplast thylakoid membrane"/>
    <property type="evidence" value="ECO:0007669"/>
    <property type="project" value="UniProtKB-SubCell"/>
</dbReference>
<dbReference type="GO" id="GO:0009522">
    <property type="term" value="C:photosystem I"/>
    <property type="evidence" value="ECO:0007669"/>
    <property type="project" value="UniProtKB-KW"/>
</dbReference>
<dbReference type="GO" id="GO:0009523">
    <property type="term" value="C:photosystem II"/>
    <property type="evidence" value="ECO:0007669"/>
    <property type="project" value="UniProtKB-KW"/>
</dbReference>
<dbReference type="GO" id="GO:0016168">
    <property type="term" value="F:chlorophyll binding"/>
    <property type="evidence" value="ECO:0007669"/>
    <property type="project" value="UniProtKB-KW"/>
</dbReference>
<dbReference type="GO" id="GO:0046872">
    <property type="term" value="F:metal ion binding"/>
    <property type="evidence" value="ECO:0007669"/>
    <property type="project" value="UniProtKB-KW"/>
</dbReference>
<dbReference type="GO" id="GO:0009765">
    <property type="term" value="P:photosynthesis, light harvesting"/>
    <property type="evidence" value="ECO:0007669"/>
    <property type="project" value="InterPro"/>
</dbReference>
<dbReference type="Gene3D" id="1.10.3460.10">
    <property type="entry name" value="Chlorophyll a/b binding protein domain"/>
    <property type="match status" value="1"/>
</dbReference>
<dbReference type="InterPro" id="IPR001344">
    <property type="entry name" value="Chloro_AB-bd_pln"/>
</dbReference>
<dbReference type="InterPro" id="IPR022796">
    <property type="entry name" value="Chloroa_b-bind"/>
</dbReference>
<dbReference type="PANTHER" id="PTHR21649">
    <property type="entry name" value="CHLOROPHYLL A/B BINDING PROTEIN"/>
    <property type="match status" value="1"/>
</dbReference>
<dbReference type="Pfam" id="PF00504">
    <property type="entry name" value="Chloroa_b-bind"/>
    <property type="match status" value="1"/>
</dbReference>
<dbReference type="SUPFAM" id="SSF103511">
    <property type="entry name" value="Chlorophyll a-b binding protein"/>
    <property type="match status" value="1"/>
</dbReference>
<proteinExistence type="evidence at transcript level"/>
<organism>
    <name type="scientific">Pinus sylvestris</name>
    <name type="common">Scotch pine</name>
    <dbReference type="NCBI Taxonomy" id="3349"/>
    <lineage>
        <taxon>Eukaryota</taxon>
        <taxon>Viridiplantae</taxon>
        <taxon>Streptophyta</taxon>
        <taxon>Embryophyta</taxon>
        <taxon>Tracheophyta</taxon>
        <taxon>Spermatophyta</taxon>
        <taxon>Pinopsida</taxon>
        <taxon>Pinidae</taxon>
        <taxon>Conifers I</taxon>
        <taxon>Pinales</taxon>
        <taxon>Pinaceae</taxon>
        <taxon>Pinus</taxon>
        <taxon>Pinus subgen. Pinus</taxon>
    </lineage>
</organism>
<keyword id="KW-0148">Chlorophyll</keyword>
<keyword id="KW-0150">Chloroplast</keyword>
<keyword id="KW-0157">Chromophore</keyword>
<keyword id="KW-0460">Magnesium</keyword>
<keyword id="KW-0472">Membrane</keyword>
<keyword id="KW-0479">Metal-binding</keyword>
<keyword id="KW-0597">Phosphoprotein</keyword>
<keyword id="KW-0602">Photosynthesis</keyword>
<keyword id="KW-0603">Photosystem I</keyword>
<keyword id="KW-0604">Photosystem II</keyword>
<keyword id="KW-0934">Plastid</keyword>
<keyword id="KW-0793">Thylakoid</keyword>
<keyword id="KW-0812">Transmembrane</keyword>
<keyword id="KW-1133">Transmembrane helix</keyword>